<comment type="function">
    <text evidence="1 6">NAD-dependent protein-lysine deacylase that decrotonylates the PDC (pyruvate dehydrogenase complex) subunit LAT1 at 'Lys-148' to inhibit PDC activity and consequently ATP production (PubMed:34927582). Also decrotonylates histone H3 crotonylated at 'Lys-18' (H3K18cr), to repress the expression of genes involved in aerobic respiration (PubMed:34927582). May also act as a NAD-dependent deacetylase (By similarity). Does not mediate desuccinylation, demalonylation, or deglutarylation of LAT1 (PubMed:34927582).</text>
</comment>
<comment type="catalytic activity">
    <reaction evidence="5">
        <text>N(6)-acetyl-L-lysyl-[protein] + NAD(+) + H2O = 2''-O-acetyl-ADP-D-ribose + nicotinamide + L-lysyl-[protein]</text>
        <dbReference type="Rhea" id="RHEA:43636"/>
        <dbReference type="Rhea" id="RHEA-COMP:9752"/>
        <dbReference type="Rhea" id="RHEA-COMP:10731"/>
        <dbReference type="ChEBI" id="CHEBI:15377"/>
        <dbReference type="ChEBI" id="CHEBI:17154"/>
        <dbReference type="ChEBI" id="CHEBI:29969"/>
        <dbReference type="ChEBI" id="CHEBI:57540"/>
        <dbReference type="ChEBI" id="CHEBI:61930"/>
        <dbReference type="ChEBI" id="CHEBI:83767"/>
        <dbReference type="EC" id="2.3.1.286"/>
    </reaction>
</comment>
<comment type="catalytic activity">
    <reaction evidence="6">
        <text>N(6)-(2E)-butenoyl-L-lysyl-[protein] + H2O = (2E)-2-butenoate + L-lysyl-[protein]</text>
        <dbReference type="Rhea" id="RHEA:69172"/>
        <dbReference type="Rhea" id="RHEA-COMP:9752"/>
        <dbReference type="Rhea" id="RHEA-COMP:13707"/>
        <dbReference type="ChEBI" id="CHEBI:15377"/>
        <dbReference type="ChEBI" id="CHEBI:29969"/>
        <dbReference type="ChEBI" id="CHEBI:35899"/>
        <dbReference type="ChEBI" id="CHEBI:137954"/>
    </reaction>
</comment>
<comment type="cofactor">
    <cofactor evidence="2">
        <name>Zn(2+)</name>
        <dbReference type="ChEBI" id="CHEBI:29105"/>
    </cofactor>
    <text evidence="2">Binds 1 zinc ion per subunit.</text>
</comment>
<comment type="subunit">
    <text evidence="6">Interacts with LAT1; the interaction is direct.</text>
</comment>
<comment type="subcellular location">
    <subcellularLocation>
        <location evidence="6">Mitochondrion</location>
    </subcellularLocation>
    <subcellularLocation>
        <location evidence="6">Cytoplasm</location>
        <location evidence="6">Cytosol</location>
    </subcellularLocation>
    <subcellularLocation>
        <location evidence="6">Nucleus</location>
    </subcellularLocation>
    <subcellularLocation>
        <location evidence="6">Chromosome</location>
    </subcellularLocation>
</comment>
<comment type="developmental stage">
    <text evidence="6">Highly expressed in conidia, decreases during germination, and increases again in the mycelium.</text>
</comment>
<comment type="disruption phenotype">
    <text evidence="6">Increases crotonylation of LAT1 (PubMed:34927582). Accelerates conidial germination (PubMed:34927582). Increases virulence in tomato (PubMed:34927582).</text>
</comment>
<comment type="similarity">
    <text evidence="8">Belongs to the sirtuin family. Class I subfamily.</text>
</comment>
<name>SIR5_FUSO4</name>
<proteinExistence type="evidence at protein level"/>
<evidence type="ECO:0000250" key="1">
    <source>
        <dbReference type="UniProtKB" id="P06700"/>
    </source>
</evidence>
<evidence type="ECO:0000250" key="2">
    <source>
        <dbReference type="UniProtKB" id="Q9NXA8"/>
    </source>
</evidence>
<evidence type="ECO:0000255" key="3"/>
<evidence type="ECO:0000255" key="4">
    <source>
        <dbReference type="HAMAP-Rule" id="MF_03160"/>
    </source>
</evidence>
<evidence type="ECO:0000255" key="5">
    <source>
        <dbReference type="PROSITE-ProRule" id="PRU00236"/>
    </source>
</evidence>
<evidence type="ECO:0000269" key="6">
    <source>
    </source>
</evidence>
<evidence type="ECO:0000303" key="7">
    <source>
    </source>
</evidence>
<evidence type="ECO:0000305" key="8"/>
<evidence type="ECO:0000312" key="9">
    <source>
        <dbReference type="EMBL" id="KNB03449.1"/>
    </source>
</evidence>
<dbReference type="EC" id="2.3.1.-" evidence="2 6"/>
<dbReference type="EC" id="2.3.1.286" evidence="3"/>
<dbReference type="EMBL" id="DS231701">
    <property type="protein sequence ID" value="KNB03449.1"/>
    <property type="molecule type" value="Genomic_DNA"/>
</dbReference>
<dbReference type="RefSeq" id="XP_018241494.1">
    <property type="nucleotide sequence ID" value="XM_018384418.1"/>
</dbReference>
<dbReference type="SMR" id="A0A0J9UVG7"/>
<dbReference type="STRING" id="426428.A0A0D2XPP4"/>
<dbReference type="GeneID" id="28947871"/>
<dbReference type="KEGG" id="fox:FOXG_05932"/>
<dbReference type="VEuPathDB" id="FungiDB:FOXG_05932"/>
<dbReference type="OrthoDB" id="89891at110618"/>
<dbReference type="Proteomes" id="UP000009097">
    <property type="component" value="Unassembled WGS sequence"/>
</dbReference>
<dbReference type="GO" id="GO:0005694">
    <property type="term" value="C:chromosome"/>
    <property type="evidence" value="ECO:0007669"/>
    <property type="project" value="UniProtKB-SubCell"/>
</dbReference>
<dbReference type="GO" id="GO:0005829">
    <property type="term" value="C:cytosol"/>
    <property type="evidence" value="ECO:0000314"/>
    <property type="project" value="UniProtKB"/>
</dbReference>
<dbReference type="GO" id="GO:0005739">
    <property type="term" value="C:mitochondrion"/>
    <property type="evidence" value="ECO:0000314"/>
    <property type="project" value="UniProtKB"/>
</dbReference>
<dbReference type="GO" id="GO:0005634">
    <property type="term" value="C:nucleus"/>
    <property type="evidence" value="ECO:0000314"/>
    <property type="project" value="UniProtKB"/>
</dbReference>
<dbReference type="GO" id="GO:0017136">
    <property type="term" value="F:histone deacetylase activity, NAD-dependent"/>
    <property type="evidence" value="ECO:0007669"/>
    <property type="project" value="TreeGrafter"/>
</dbReference>
<dbReference type="GO" id="GO:0046872">
    <property type="term" value="F:metal ion binding"/>
    <property type="evidence" value="ECO:0007669"/>
    <property type="project" value="UniProtKB-KW"/>
</dbReference>
<dbReference type="GO" id="GO:0070403">
    <property type="term" value="F:NAD+ binding"/>
    <property type="evidence" value="ECO:0007669"/>
    <property type="project" value="InterPro"/>
</dbReference>
<dbReference type="GO" id="GO:0160012">
    <property type="term" value="F:NAD-dependent histone decrotonylase activity"/>
    <property type="evidence" value="ECO:0000315"/>
    <property type="project" value="UniProtKB"/>
</dbReference>
<dbReference type="GO" id="GO:0160011">
    <property type="term" value="F:NAD-dependent protein decrotonylase activity"/>
    <property type="evidence" value="ECO:0000314"/>
    <property type="project" value="UniProtKB"/>
</dbReference>
<dbReference type="GO" id="GO:0036054">
    <property type="term" value="F:protein-malonyllysine demalonylase activity"/>
    <property type="evidence" value="ECO:0007669"/>
    <property type="project" value="InterPro"/>
</dbReference>
<dbReference type="GO" id="GO:0036055">
    <property type="term" value="F:protein-succinyllysine desuccinylase activity"/>
    <property type="evidence" value="ECO:0007669"/>
    <property type="project" value="InterPro"/>
</dbReference>
<dbReference type="GO" id="GO:1901856">
    <property type="term" value="P:negative regulation of cellular respiration"/>
    <property type="evidence" value="ECO:0000315"/>
    <property type="project" value="UniProtKB"/>
</dbReference>
<dbReference type="CDD" id="cd01412">
    <property type="entry name" value="SIRT5_Af1_CobB"/>
    <property type="match status" value="1"/>
</dbReference>
<dbReference type="Gene3D" id="3.30.1600.10">
    <property type="entry name" value="SIR2/SIRT2 'Small Domain"/>
    <property type="match status" value="1"/>
</dbReference>
<dbReference type="Gene3D" id="3.40.50.1220">
    <property type="entry name" value="TPP-binding domain"/>
    <property type="match status" value="1"/>
</dbReference>
<dbReference type="InterPro" id="IPR029035">
    <property type="entry name" value="DHS-like_NAD/FAD-binding_dom"/>
</dbReference>
<dbReference type="InterPro" id="IPR050134">
    <property type="entry name" value="NAD-dep_sirtuin_deacylases"/>
</dbReference>
<dbReference type="InterPro" id="IPR003000">
    <property type="entry name" value="Sirtuin"/>
</dbReference>
<dbReference type="InterPro" id="IPR026591">
    <property type="entry name" value="Sirtuin_cat_small_dom_sf"/>
</dbReference>
<dbReference type="InterPro" id="IPR027546">
    <property type="entry name" value="Sirtuin_class_III"/>
</dbReference>
<dbReference type="InterPro" id="IPR026590">
    <property type="entry name" value="Ssirtuin_cat_dom"/>
</dbReference>
<dbReference type="PANTHER" id="PTHR11085">
    <property type="entry name" value="NAD-DEPENDENT PROTEIN DEACYLASE SIRTUIN-5, MITOCHONDRIAL-RELATED"/>
    <property type="match status" value="1"/>
</dbReference>
<dbReference type="PANTHER" id="PTHR11085:SF10">
    <property type="entry name" value="NAD-DEPENDENT PROTEIN DEACYLASE SIRTUIN-5, MITOCHONDRIAL-RELATED"/>
    <property type="match status" value="1"/>
</dbReference>
<dbReference type="Pfam" id="PF02146">
    <property type="entry name" value="SIR2"/>
    <property type="match status" value="1"/>
</dbReference>
<dbReference type="SUPFAM" id="SSF52467">
    <property type="entry name" value="DHS-like NAD/FAD-binding domain"/>
    <property type="match status" value="1"/>
</dbReference>
<dbReference type="PROSITE" id="PS50305">
    <property type="entry name" value="SIRTUIN"/>
    <property type="match status" value="1"/>
</dbReference>
<keyword id="KW-0156">Chromatin regulator</keyword>
<keyword id="KW-0158">Chromosome</keyword>
<keyword id="KW-0963">Cytoplasm</keyword>
<keyword id="KW-0479">Metal-binding</keyword>
<keyword id="KW-0496">Mitochondrion</keyword>
<keyword id="KW-0520">NAD</keyword>
<keyword id="KW-0539">Nucleus</keyword>
<keyword id="KW-1185">Reference proteome</keyword>
<keyword id="KW-0808">Transferase</keyword>
<keyword id="KW-0809">Transit peptide</keyword>
<keyword id="KW-0862">Zinc</keyword>
<reference evidence="9" key="1">
    <citation type="journal article" date="2010" name="Nature">
        <title>Comparative genomics reveals mobile pathogenicity chromosomes in Fusarium.</title>
        <authorList>
            <person name="Ma L.-J."/>
            <person name="van der Does H.C."/>
            <person name="Borkovich K.A."/>
            <person name="Coleman J.J."/>
            <person name="Daboussi M.-J."/>
            <person name="Di Pietro A."/>
            <person name="Dufresne M."/>
            <person name="Freitag M."/>
            <person name="Grabherr M."/>
            <person name="Henrissat B."/>
            <person name="Houterman P.M."/>
            <person name="Kang S."/>
            <person name="Shim W.-B."/>
            <person name="Woloshuk C."/>
            <person name="Xie X."/>
            <person name="Xu J.-R."/>
            <person name="Antoniw J."/>
            <person name="Baker S.E."/>
            <person name="Bluhm B.H."/>
            <person name="Breakspear A."/>
            <person name="Brown D.W."/>
            <person name="Butchko R.A.E."/>
            <person name="Chapman S."/>
            <person name="Coulson R."/>
            <person name="Coutinho P.M."/>
            <person name="Danchin E.G.J."/>
            <person name="Diener A."/>
            <person name="Gale L.R."/>
            <person name="Gardiner D.M."/>
            <person name="Goff S."/>
            <person name="Hammond-Kosack K.E."/>
            <person name="Hilburn K."/>
            <person name="Hua-Van A."/>
            <person name="Jonkers W."/>
            <person name="Kazan K."/>
            <person name="Kodira C.D."/>
            <person name="Koehrsen M."/>
            <person name="Kumar L."/>
            <person name="Lee Y.-H."/>
            <person name="Li L."/>
            <person name="Manners J.M."/>
            <person name="Miranda-Saavedra D."/>
            <person name="Mukherjee M."/>
            <person name="Park G."/>
            <person name="Park J."/>
            <person name="Park S.-Y."/>
            <person name="Proctor R.H."/>
            <person name="Regev A."/>
            <person name="Ruiz-Roldan M.C."/>
            <person name="Sain D."/>
            <person name="Sakthikumar S."/>
            <person name="Sykes S."/>
            <person name="Schwartz D.C."/>
            <person name="Turgeon B.G."/>
            <person name="Wapinski I."/>
            <person name="Yoder O."/>
            <person name="Young S."/>
            <person name="Zeng Q."/>
            <person name="Zhou S."/>
            <person name="Galagan J."/>
            <person name="Cuomo C.A."/>
            <person name="Kistler H.C."/>
            <person name="Rep M."/>
        </authorList>
    </citation>
    <scope>NUCLEOTIDE SEQUENCE [LARGE SCALE GENOMIC DNA]</scope>
    <source>
        <strain evidence="9">4287 / CBS 123668 / FGSC 9935 / NRRL 34936</strain>
    </source>
</reference>
<reference evidence="8" key="2">
    <citation type="journal article" date="2021" name="Elife">
        <title>The decrotonylase FoSir5 facilitates mitochondrial metabolic state switching in conidial germination of Fusarium oxysporum.</title>
        <authorList>
            <person name="Zhang N."/>
            <person name="Song L."/>
            <person name="Xu Y."/>
            <person name="Pei X."/>
            <person name="Luisi B.F."/>
            <person name="Liang W."/>
        </authorList>
    </citation>
    <scope>FUNCTION</scope>
    <scope>CATALYTIC ACTIVITY</scope>
    <scope>INTERACTION WITH LAT1</scope>
    <scope>SUBCELLULAR LOCATION</scope>
    <scope>DEVELOPMENTAL STAGE</scope>
    <scope>DISRUPTION PHENOTYPE</scope>
</reference>
<feature type="transit peptide" description="Mitochondrion" evidence="3">
    <location>
        <begin position="1"/>
        <end position="26"/>
    </location>
</feature>
<feature type="chain" id="PRO_0000457717" description="NAD-dependent protein deacylase SIR5" evidence="3">
    <location>
        <begin position="27"/>
        <end position="326"/>
    </location>
</feature>
<feature type="domain" description="Deacetylase sirtuin-type" evidence="5">
    <location>
        <begin position="28"/>
        <end position="324"/>
    </location>
</feature>
<feature type="active site" description="Proton acceptor" evidence="5">
    <location>
        <position position="151"/>
    </location>
</feature>
<feature type="binding site" evidence="2">
    <location>
        <begin position="53"/>
        <end position="72"/>
    </location>
    <ligand>
        <name>NAD(+)</name>
        <dbReference type="ChEBI" id="CHEBI:57540"/>
    </ligand>
</feature>
<feature type="binding site" evidence="4">
    <location>
        <position position="97"/>
    </location>
    <ligand>
        <name>substrate</name>
    </ligand>
</feature>
<feature type="binding site" evidence="4">
    <location>
        <position position="100"/>
    </location>
    <ligand>
        <name>substrate</name>
    </ligand>
</feature>
<feature type="binding site" evidence="5">
    <location>
        <position position="159"/>
    </location>
    <ligand>
        <name>Zn(2+)</name>
        <dbReference type="ChEBI" id="CHEBI:29105"/>
    </ligand>
</feature>
<feature type="binding site" evidence="5">
    <location>
        <position position="162"/>
    </location>
    <ligand>
        <name>Zn(2+)</name>
        <dbReference type="ChEBI" id="CHEBI:29105"/>
    </ligand>
</feature>
<feature type="binding site" evidence="5">
    <location>
        <position position="211"/>
    </location>
    <ligand>
        <name>Zn(2+)</name>
        <dbReference type="ChEBI" id="CHEBI:29105"/>
    </ligand>
</feature>
<feature type="binding site" evidence="5">
    <location>
        <position position="214"/>
    </location>
    <ligand>
        <name>Zn(2+)</name>
        <dbReference type="ChEBI" id="CHEBI:29105"/>
    </ligand>
</feature>
<gene>
    <name evidence="7" type="primary">SIR5</name>
    <name evidence="9" type="ORF">FOXG_05932</name>
</gene>
<organism evidence="9">
    <name type="scientific">Fusarium oxysporum f. sp. lycopersici (strain 4287 / CBS 123668 / FGSC 9935 / NRRL 34936)</name>
    <name type="common">Fusarium vascular wilt of tomato</name>
    <dbReference type="NCBI Taxonomy" id="426428"/>
    <lineage>
        <taxon>Eukaryota</taxon>
        <taxon>Fungi</taxon>
        <taxon>Dikarya</taxon>
        <taxon>Ascomycota</taxon>
        <taxon>Pezizomycotina</taxon>
        <taxon>Sordariomycetes</taxon>
        <taxon>Hypocreomycetidae</taxon>
        <taxon>Hypocreales</taxon>
        <taxon>Nectriaceae</taxon>
        <taxon>Fusarium</taxon>
        <taxon>Fusarium oxysporum species complex</taxon>
    </lineage>
</organism>
<accession>A0A0J9UVG7</accession>
<accession>A0A0D2XPP4</accession>
<protein>
    <recommendedName>
        <fullName evidence="8">NAD-dependent protein deacylase SIR5</fullName>
        <ecNumber evidence="2">2.3.1.-</ecNumber>
    </recommendedName>
    <alternativeName>
        <fullName evidence="7">FoSIR5</fullName>
    </alternativeName>
    <alternativeName>
        <fullName evidence="8">NAD-dependent protein deacetylase SIR5</fullName>
        <ecNumber evidence="3">2.3.1.286</ecNumber>
    </alternativeName>
    <alternativeName>
        <fullName evidence="7">Protein decrotonylase SIR5</fullName>
        <ecNumber evidence="6">2.3.1.-</ecNumber>
    </alternativeName>
</protein>
<sequence length="326" mass="36006">MRLLRPTPRLSSIFSSKTATSNLRFFTAMAPHNDVGAFHEALRSSKRILALCGAGLSASSGLPTFRGAGGLWRNHDATSLATLSAFKNDPGLVWLFYNYRRHMCLRAEPNPAHYALAALAEKNKDFLCLTQNVDNLSQQAGHPQDQLRTLHGSLFDIKCTNCDWIQRGNYDDPFCPALAPASVDVEPGKPFPLLDASLPLDPISPDDIPKCPQCKIGFQRPGVVWFGENLDEVMMMGITNWLLEDKVDLMLVIGTSAQVYPAAGYIDKAKRKGARIAVINPEAENEEEMYKVKPGDFAFGKDAAEYLPLLLEPVIGKLETDKKERS</sequence>